<evidence type="ECO:0000255" key="1">
    <source>
        <dbReference type="HAMAP-Rule" id="MF_01694"/>
    </source>
</evidence>
<evidence type="ECO:0000255" key="2">
    <source>
        <dbReference type="PROSITE-ProRule" id="PRU01266"/>
    </source>
</evidence>
<sequence>MSQLQVRHDWKREEIEALFALPMNDLLFKAHSIHREVYDPNEVQISRLLSIKTGACPEDCKYCPQSARYDTGLEKERLLAMETVLTEARSAKAAGASRFCMGAAWRNPKDKDMPYLKQMVQEVKALGMETCMTLGMLSAEQANELADAGLDYYNHNLDTSPEYYGDVITTRTYQNRLDTLSHVRASGMKVCSGGIVGMGEKATDRAGLLQQLANLPQHPDSVPINMLVKVAGTPFEKLDDLDPLEFVRTIAVARILMPKSRVRLSAGRENMTDELQAMCFFAGANSIFYGCKLLTTPNPEESDDMGLFRRLGLRPEQGAAATIDDEQAVLAKAAAHQDKASAPFYDAAAL</sequence>
<reference key="1">
    <citation type="submission" date="2006-09" db="EMBL/GenBank/DDBJ databases">
        <title>Complete sequence of chromosome 1 of Shewanella sp. ANA-3.</title>
        <authorList>
            <person name="Copeland A."/>
            <person name="Lucas S."/>
            <person name="Lapidus A."/>
            <person name="Barry K."/>
            <person name="Detter J.C."/>
            <person name="Glavina del Rio T."/>
            <person name="Hammon N."/>
            <person name="Israni S."/>
            <person name="Dalin E."/>
            <person name="Tice H."/>
            <person name="Pitluck S."/>
            <person name="Chertkov O."/>
            <person name="Brettin T."/>
            <person name="Bruce D."/>
            <person name="Han C."/>
            <person name="Tapia R."/>
            <person name="Gilna P."/>
            <person name="Schmutz J."/>
            <person name="Larimer F."/>
            <person name="Land M."/>
            <person name="Hauser L."/>
            <person name="Kyrpides N."/>
            <person name="Kim E."/>
            <person name="Newman D."/>
            <person name="Salticov C."/>
            <person name="Konstantinidis K."/>
            <person name="Klappenback J."/>
            <person name="Tiedje J."/>
            <person name="Richardson P."/>
        </authorList>
    </citation>
    <scope>NUCLEOTIDE SEQUENCE [LARGE SCALE GENOMIC DNA]</scope>
    <source>
        <strain>ANA-3</strain>
    </source>
</reference>
<keyword id="KW-0001">2Fe-2S</keyword>
<keyword id="KW-0004">4Fe-4S</keyword>
<keyword id="KW-0093">Biotin biosynthesis</keyword>
<keyword id="KW-0408">Iron</keyword>
<keyword id="KW-0411">Iron-sulfur</keyword>
<keyword id="KW-0479">Metal-binding</keyword>
<keyword id="KW-0949">S-adenosyl-L-methionine</keyword>
<keyword id="KW-0808">Transferase</keyword>
<accession>A0KY79</accession>
<comment type="function">
    <text evidence="1">Catalyzes the conversion of dethiobiotin (DTB) to biotin by the insertion of a sulfur atom into dethiobiotin via a radical-based mechanism.</text>
</comment>
<comment type="catalytic activity">
    <reaction evidence="1">
        <text>(4R,5S)-dethiobiotin + (sulfur carrier)-SH + 2 reduced [2Fe-2S]-[ferredoxin] + 2 S-adenosyl-L-methionine = (sulfur carrier)-H + biotin + 2 5'-deoxyadenosine + 2 L-methionine + 2 oxidized [2Fe-2S]-[ferredoxin]</text>
        <dbReference type="Rhea" id="RHEA:22060"/>
        <dbReference type="Rhea" id="RHEA-COMP:10000"/>
        <dbReference type="Rhea" id="RHEA-COMP:10001"/>
        <dbReference type="Rhea" id="RHEA-COMP:14737"/>
        <dbReference type="Rhea" id="RHEA-COMP:14739"/>
        <dbReference type="ChEBI" id="CHEBI:17319"/>
        <dbReference type="ChEBI" id="CHEBI:29917"/>
        <dbReference type="ChEBI" id="CHEBI:33737"/>
        <dbReference type="ChEBI" id="CHEBI:33738"/>
        <dbReference type="ChEBI" id="CHEBI:57586"/>
        <dbReference type="ChEBI" id="CHEBI:57844"/>
        <dbReference type="ChEBI" id="CHEBI:59789"/>
        <dbReference type="ChEBI" id="CHEBI:64428"/>
        <dbReference type="ChEBI" id="CHEBI:149473"/>
        <dbReference type="EC" id="2.8.1.6"/>
    </reaction>
</comment>
<comment type="cofactor">
    <cofactor evidence="1">
        <name>[4Fe-4S] cluster</name>
        <dbReference type="ChEBI" id="CHEBI:49883"/>
    </cofactor>
    <text evidence="1">Binds 1 [4Fe-4S] cluster. The cluster is coordinated with 3 cysteines and an exchangeable S-adenosyl-L-methionine.</text>
</comment>
<comment type="cofactor">
    <cofactor evidence="1">
        <name>[2Fe-2S] cluster</name>
        <dbReference type="ChEBI" id="CHEBI:190135"/>
    </cofactor>
    <text evidence="1">Binds 1 [2Fe-2S] cluster. The cluster is coordinated with 3 cysteines and 1 arginine.</text>
</comment>
<comment type="pathway">
    <text evidence="1">Cofactor biosynthesis; biotin biosynthesis; biotin from 7,8-diaminononanoate: step 2/2.</text>
</comment>
<comment type="subunit">
    <text evidence="1">Homodimer.</text>
</comment>
<comment type="similarity">
    <text evidence="1">Belongs to the radical SAM superfamily. Biotin synthase family.</text>
</comment>
<proteinExistence type="inferred from homology"/>
<dbReference type="EC" id="2.8.1.6" evidence="1"/>
<dbReference type="EMBL" id="CP000469">
    <property type="protein sequence ID" value="ABK48748.1"/>
    <property type="molecule type" value="Genomic_DNA"/>
</dbReference>
<dbReference type="RefSeq" id="WP_011623120.1">
    <property type="nucleotide sequence ID" value="NC_008577.1"/>
</dbReference>
<dbReference type="SMR" id="A0KY79"/>
<dbReference type="STRING" id="94122.Shewana3_2519"/>
<dbReference type="GeneID" id="94728459"/>
<dbReference type="KEGG" id="shn:Shewana3_2519"/>
<dbReference type="eggNOG" id="COG0502">
    <property type="taxonomic scope" value="Bacteria"/>
</dbReference>
<dbReference type="HOGENOM" id="CLU_033172_1_2_6"/>
<dbReference type="OrthoDB" id="9786826at2"/>
<dbReference type="UniPathway" id="UPA00078">
    <property type="reaction ID" value="UER00162"/>
</dbReference>
<dbReference type="Proteomes" id="UP000002589">
    <property type="component" value="Chromosome"/>
</dbReference>
<dbReference type="GO" id="GO:0051537">
    <property type="term" value="F:2 iron, 2 sulfur cluster binding"/>
    <property type="evidence" value="ECO:0007669"/>
    <property type="project" value="UniProtKB-KW"/>
</dbReference>
<dbReference type="GO" id="GO:0051539">
    <property type="term" value="F:4 iron, 4 sulfur cluster binding"/>
    <property type="evidence" value="ECO:0007669"/>
    <property type="project" value="UniProtKB-KW"/>
</dbReference>
<dbReference type="GO" id="GO:0004076">
    <property type="term" value="F:biotin synthase activity"/>
    <property type="evidence" value="ECO:0007669"/>
    <property type="project" value="UniProtKB-UniRule"/>
</dbReference>
<dbReference type="GO" id="GO:0005506">
    <property type="term" value="F:iron ion binding"/>
    <property type="evidence" value="ECO:0007669"/>
    <property type="project" value="UniProtKB-UniRule"/>
</dbReference>
<dbReference type="GO" id="GO:0009102">
    <property type="term" value="P:biotin biosynthetic process"/>
    <property type="evidence" value="ECO:0007669"/>
    <property type="project" value="UniProtKB-UniRule"/>
</dbReference>
<dbReference type="CDD" id="cd01335">
    <property type="entry name" value="Radical_SAM"/>
    <property type="match status" value="1"/>
</dbReference>
<dbReference type="FunFam" id="3.20.20.70:FF:000011">
    <property type="entry name" value="Biotin synthase"/>
    <property type="match status" value="1"/>
</dbReference>
<dbReference type="Gene3D" id="3.20.20.70">
    <property type="entry name" value="Aldolase class I"/>
    <property type="match status" value="1"/>
</dbReference>
<dbReference type="HAMAP" id="MF_01694">
    <property type="entry name" value="BioB"/>
    <property type="match status" value="1"/>
</dbReference>
<dbReference type="InterPro" id="IPR013785">
    <property type="entry name" value="Aldolase_TIM"/>
</dbReference>
<dbReference type="InterPro" id="IPR010722">
    <property type="entry name" value="BATS_dom"/>
</dbReference>
<dbReference type="InterPro" id="IPR002684">
    <property type="entry name" value="Biotin_synth/BioAB"/>
</dbReference>
<dbReference type="InterPro" id="IPR024177">
    <property type="entry name" value="Biotin_synthase"/>
</dbReference>
<dbReference type="InterPro" id="IPR006638">
    <property type="entry name" value="Elp3/MiaA/NifB-like_rSAM"/>
</dbReference>
<dbReference type="InterPro" id="IPR007197">
    <property type="entry name" value="rSAM"/>
</dbReference>
<dbReference type="NCBIfam" id="TIGR00433">
    <property type="entry name" value="bioB"/>
    <property type="match status" value="1"/>
</dbReference>
<dbReference type="PANTHER" id="PTHR22976">
    <property type="entry name" value="BIOTIN SYNTHASE"/>
    <property type="match status" value="1"/>
</dbReference>
<dbReference type="PANTHER" id="PTHR22976:SF2">
    <property type="entry name" value="BIOTIN SYNTHASE, MITOCHONDRIAL"/>
    <property type="match status" value="1"/>
</dbReference>
<dbReference type="Pfam" id="PF06968">
    <property type="entry name" value="BATS"/>
    <property type="match status" value="1"/>
</dbReference>
<dbReference type="Pfam" id="PF04055">
    <property type="entry name" value="Radical_SAM"/>
    <property type="match status" value="1"/>
</dbReference>
<dbReference type="PIRSF" id="PIRSF001619">
    <property type="entry name" value="Biotin_synth"/>
    <property type="match status" value="1"/>
</dbReference>
<dbReference type="SFLD" id="SFLDF00272">
    <property type="entry name" value="biotin_synthase"/>
    <property type="match status" value="1"/>
</dbReference>
<dbReference type="SFLD" id="SFLDG01278">
    <property type="entry name" value="biotin_synthase_like"/>
    <property type="match status" value="1"/>
</dbReference>
<dbReference type="SMART" id="SM00876">
    <property type="entry name" value="BATS"/>
    <property type="match status" value="1"/>
</dbReference>
<dbReference type="SMART" id="SM00729">
    <property type="entry name" value="Elp3"/>
    <property type="match status" value="1"/>
</dbReference>
<dbReference type="SUPFAM" id="SSF102114">
    <property type="entry name" value="Radical SAM enzymes"/>
    <property type="match status" value="1"/>
</dbReference>
<dbReference type="PROSITE" id="PS51918">
    <property type="entry name" value="RADICAL_SAM"/>
    <property type="match status" value="1"/>
</dbReference>
<gene>
    <name evidence="1" type="primary">bioB</name>
    <name type="ordered locus">Shewana3_2519</name>
</gene>
<organism>
    <name type="scientific">Shewanella sp. (strain ANA-3)</name>
    <dbReference type="NCBI Taxonomy" id="94122"/>
    <lineage>
        <taxon>Bacteria</taxon>
        <taxon>Pseudomonadati</taxon>
        <taxon>Pseudomonadota</taxon>
        <taxon>Gammaproteobacteria</taxon>
        <taxon>Alteromonadales</taxon>
        <taxon>Shewanellaceae</taxon>
        <taxon>Shewanella</taxon>
    </lineage>
</organism>
<feature type="chain" id="PRO_0000381625" description="Biotin synthase">
    <location>
        <begin position="1"/>
        <end position="350"/>
    </location>
</feature>
<feature type="domain" description="Radical SAM core" evidence="2">
    <location>
        <begin position="41"/>
        <end position="268"/>
    </location>
</feature>
<feature type="binding site" evidence="1">
    <location>
        <position position="56"/>
    </location>
    <ligand>
        <name>[4Fe-4S] cluster</name>
        <dbReference type="ChEBI" id="CHEBI:49883"/>
        <note>4Fe-4S-S-AdoMet</note>
    </ligand>
</feature>
<feature type="binding site" evidence="1">
    <location>
        <position position="60"/>
    </location>
    <ligand>
        <name>[4Fe-4S] cluster</name>
        <dbReference type="ChEBI" id="CHEBI:49883"/>
        <note>4Fe-4S-S-AdoMet</note>
    </ligand>
</feature>
<feature type="binding site" evidence="1">
    <location>
        <position position="63"/>
    </location>
    <ligand>
        <name>[4Fe-4S] cluster</name>
        <dbReference type="ChEBI" id="CHEBI:49883"/>
        <note>4Fe-4S-S-AdoMet</note>
    </ligand>
</feature>
<feature type="binding site" evidence="1">
    <location>
        <position position="100"/>
    </location>
    <ligand>
        <name>[2Fe-2S] cluster</name>
        <dbReference type="ChEBI" id="CHEBI:190135"/>
    </ligand>
</feature>
<feature type="binding site" evidence="1">
    <location>
        <position position="131"/>
    </location>
    <ligand>
        <name>[2Fe-2S] cluster</name>
        <dbReference type="ChEBI" id="CHEBI:190135"/>
    </ligand>
</feature>
<feature type="binding site" evidence="1">
    <location>
        <position position="191"/>
    </location>
    <ligand>
        <name>[2Fe-2S] cluster</name>
        <dbReference type="ChEBI" id="CHEBI:190135"/>
    </ligand>
</feature>
<feature type="binding site" evidence="1">
    <location>
        <position position="263"/>
    </location>
    <ligand>
        <name>[2Fe-2S] cluster</name>
        <dbReference type="ChEBI" id="CHEBI:190135"/>
    </ligand>
</feature>
<protein>
    <recommendedName>
        <fullName evidence="1">Biotin synthase</fullName>
        <ecNumber evidence="1">2.8.1.6</ecNumber>
    </recommendedName>
</protein>
<name>BIOB_SHESA</name>